<gene>
    <name type="primary">OPG072</name>
    <name type="ORF">E10R</name>
</gene>
<organism>
    <name type="scientific">Variola virus</name>
    <dbReference type="NCBI Taxonomy" id="10255"/>
    <lineage>
        <taxon>Viruses</taxon>
        <taxon>Varidnaviria</taxon>
        <taxon>Bamfordvirae</taxon>
        <taxon>Nucleocytoviricota</taxon>
        <taxon>Pokkesviricetes</taxon>
        <taxon>Chitovirales</taxon>
        <taxon>Poxviridae</taxon>
        <taxon>Chordopoxvirinae</taxon>
        <taxon>Orthopoxvirus</taxon>
    </lineage>
</organism>
<proteinExistence type="inferred from homology"/>
<comment type="function">
    <text evidence="1">FAD-dependent sulfhydryl oxidase that catalyzes disulfide bond formation. The complete pathway for formation of disulfide bonds in intracellular virion membrane proteins sequentially involves thiol-disulfide transfer between OPG072, OPG128 and OPG088.</text>
</comment>
<comment type="catalytic activity">
    <reaction evidence="1">
        <text>2 R'C(R)SH + O2 = R'C(R)S-S(R)CR' + H2O2</text>
        <dbReference type="Rhea" id="RHEA:17357"/>
        <dbReference type="ChEBI" id="CHEBI:15379"/>
        <dbReference type="ChEBI" id="CHEBI:16240"/>
        <dbReference type="ChEBI" id="CHEBI:16520"/>
        <dbReference type="ChEBI" id="CHEBI:17412"/>
        <dbReference type="EC" id="1.8.3.2"/>
    </reaction>
</comment>
<comment type="cofactor">
    <cofactor evidence="3">
        <name>FAD</name>
        <dbReference type="ChEBI" id="CHEBI:57692"/>
    </cofactor>
</comment>
<comment type="subunit">
    <text evidence="1">Interacts with OPG128; this interaction involves formation of a transient disulfide-bonded intermediate, allowing disulfide bond transfer.</text>
</comment>
<comment type="subcellular location">
    <subcellularLocation>
        <location evidence="1">Virion membrane</location>
    </subcellularLocation>
    <subcellularLocation>
        <location evidence="1">Host cytoplasm</location>
    </subcellularLocation>
    <text evidence="1">Associated with crescent membranes, immature virions (IV) and mature virions (MV).</text>
</comment>
<comment type="induction">
    <text evidence="1">Expressed in the early phase of the viral replicative cycle.</text>
</comment>
<comment type="similarity">
    <text evidence="4">Belongs to the orthopoxvirus OPG072 family.</text>
</comment>
<keyword id="KW-1015">Disulfide bond</keyword>
<keyword id="KW-0274">FAD</keyword>
<keyword id="KW-0285">Flavoprotein</keyword>
<keyword id="KW-1035">Host cytoplasm</keyword>
<keyword id="KW-0426">Late protein</keyword>
<keyword id="KW-0472">Membrane</keyword>
<keyword id="KW-0560">Oxidoreductase</keyword>
<keyword id="KW-0676">Redox-active center</keyword>
<keyword id="KW-0812">Transmembrane</keyword>
<keyword id="KW-1133">Transmembrane helix</keyword>
<keyword id="KW-0261">Viral envelope protein</keyword>
<keyword id="KW-0946">Virion</keyword>
<organismHost>
    <name type="scientific">Homo sapiens</name>
    <name type="common">Human</name>
    <dbReference type="NCBI Taxonomy" id="9606"/>
</organismHost>
<sequence length="95" mass="10836">MNPKHWGRAAWTIIFIVLSQAGLDGNIEACKRKLYTIVSTLPCPACRRHATIAIEDNNIMSSNDLNYIYYFFIRLFNNLASDPKYAIDVSKVKPL</sequence>
<name>PG072_VARV</name>
<protein>
    <recommendedName>
        <fullName>Probable FAD-linked sulfhydryl oxidase OPG072</fullName>
        <ecNumber evidence="1">1.8.3.2</ecNumber>
    </recommendedName>
    <alternativeName>
        <fullName>Probable FAD-linked sulfhydryl oxidase E10</fullName>
        <ecNumber>1.8.3.2</ecNumber>
    </alternativeName>
</protein>
<feature type="chain" id="PRO_0000448098" description="Probable FAD-linked sulfhydryl oxidase OPG072">
    <location>
        <begin position="1"/>
        <end position="95"/>
    </location>
</feature>
<feature type="topological domain" description="Intravirion" evidence="2">
    <location>
        <begin position="1"/>
        <end position="8"/>
    </location>
</feature>
<feature type="transmembrane region" description="Helical" evidence="2">
    <location>
        <begin position="9"/>
        <end position="25"/>
    </location>
</feature>
<feature type="topological domain" description="Virion surface" evidence="2">
    <location>
        <begin position="26"/>
        <end position="95"/>
    </location>
</feature>
<feature type="domain" description="ERV/ALR sulfhydryl oxidase" evidence="3">
    <location>
        <begin position="1"/>
        <end position="95"/>
    </location>
</feature>
<feature type="disulfide bond" description="Redox-active" evidence="3">
    <location>
        <begin position="43"/>
        <end position="46"/>
    </location>
</feature>
<evidence type="ECO:0000250" key="1">
    <source>
        <dbReference type="UniProtKB" id="P23373"/>
    </source>
</evidence>
<evidence type="ECO:0000255" key="2"/>
<evidence type="ECO:0000255" key="3">
    <source>
        <dbReference type="PROSITE-ProRule" id="PRU00654"/>
    </source>
</evidence>
<evidence type="ECO:0000305" key="4"/>
<reference key="1">
    <citation type="journal article" date="1993" name="Nature">
        <title>Potential virulence determinants in terminal regions of variola smallpox virus genome.</title>
        <authorList>
            <person name="Massung R.F."/>
            <person name="Esposito J.J."/>
            <person name="Liu L.I."/>
            <person name="Qi J."/>
            <person name="Utterback T.R."/>
            <person name="Knight J.C."/>
            <person name="Aubin L."/>
            <person name="Yuran T.E."/>
            <person name="Parsons J.M."/>
            <person name="Loparev V.N."/>
            <person name="Selivanov N.A."/>
            <person name="Cavallaro K.F."/>
            <person name="Kerlavage A.R."/>
            <person name="Mahy B.W.J."/>
            <person name="Venter J.C."/>
        </authorList>
    </citation>
    <scope>NUCLEOTIDE SEQUENCE [GENOMIC DNA]</scope>
    <source>
        <strain>Bangladesh-1975</strain>
    </source>
</reference>
<accession>P0DOL6</accession>
<accession>P33821</accession>
<dbReference type="EC" id="1.8.3.2" evidence="1"/>
<dbReference type="EMBL" id="L22579">
    <property type="protein sequence ID" value="AAA60799.1"/>
    <property type="molecule type" value="Genomic_DNA"/>
</dbReference>
<dbReference type="PIR" id="T28489">
    <property type="entry name" value="T28489"/>
</dbReference>
<dbReference type="RefSeq" id="NP_042095.1">
    <property type="nucleotide sequence ID" value="NC_001611.1"/>
</dbReference>
<dbReference type="SMR" id="P0DOL6"/>
<dbReference type="GeneID" id="1486405"/>
<dbReference type="KEGG" id="vg:1486405"/>
<dbReference type="Proteomes" id="UP000119805">
    <property type="component" value="Segment"/>
</dbReference>
<dbReference type="GO" id="GO:0030430">
    <property type="term" value="C:host cell cytoplasm"/>
    <property type="evidence" value="ECO:0007669"/>
    <property type="project" value="UniProtKB-SubCell"/>
</dbReference>
<dbReference type="GO" id="GO:0016020">
    <property type="term" value="C:membrane"/>
    <property type="evidence" value="ECO:0007669"/>
    <property type="project" value="UniProtKB-KW"/>
</dbReference>
<dbReference type="GO" id="GO:0019031">
    <property type="term" value="C:viral envelope"/>
    <property type="evidence" value="ECO:0007669"/>
    <property type="project" value="UniProtKB-KW"/>
</dbReference>
<dbReference type="GO" id="GO:0055036">
    <property type="term" value="C:virion membrane"/>
    <property type="evidence" value="ECO:0007669"/>
    <property type="project" value="UniProtKB-SubCell"/>
</dbReference>
<dbReference type="GO" id="GO:0016972">
    <property type="term" value="F:thiol oxidase activity"/>
    <property type="evidence" value="ECO:0007669"/>
    <property type="project" value="UniProtKB-EC"/>
</dbReference>
<dbReference type="Gene3D" id="1.20.120.310">
    <property type="entry name" value="ERV/ALR sulfhydryl oxidase domain"/>
    <property type="match status" value="1"/>
</dbReference>
<dbReference type="InterPro" id="IPR036774">
    <property type="entry name" value="ERV/ALR_sulphydryl_oxid_sf"/>
</dbReference>
<dbReference type="InterPro" id="IPR017905">
    <property type="entry name" value="ERV/ALR_sulphydryl_oxidase"/>
</dbReference>
<dbReference type="InterPro" id="IPR006890">
    <property type="entry name" value="Sulphydryl_Oase_FAD-link_ERV1"/>
</dbReference>
<dbReference type="Pfam" id="PF04805">
    <property type="entry name" value="Pox_E10"/>
    <property type="match status" value="1"/>
</dbReference>
<dbReference type="PIRSF" id="PIRSF015696">
    <property type="entry name" value="VAC_E10R"/>
    <property type="match status" value="1"/>
</dbReference>
<dbReference type="SUPFAM" id="SSF69000">
    <property type="entry name" value="FAD-dependent thiol oxidase"/>
    <property type="match status" value="1"/>
</dbReference>
<dbReference type="PROSITE" id="PS51324">
    <property type="entry name" value="ERV_ALR"/>
    <property type="match status" value="1"/>
</dbReference>